<feature type="chain" id="PRO_0000423701" description="Nucleosome assembly protein 1;4">
    <location>
        <begin position="1"/>
        <end position="356"/>
    </location>
</feature>
<feature type="region of interest" description="Disordered" evidence="3">
    <location>
        <begin position="304"/>
        <end position="356"/>
    </location>
</feature>
<feature type="coiled-coil region" evidence="2">
    <location>
        <begin position="34"/>
        <end position="88"/>
    </location>
</feature>
<feature type="short sequence motif" description="Nuclear export signal" evidence="2">
    <location>
        <begin position="55"/>
        <end position="70"/>
    </location>
</feature>
<feature type="short sequence motif" description="Nuclear localization signal" evidence="2">
    <location>
        <begin position="230"/>
        <end position="235"/>
    </location>
</feature>
<feature type="compositionally biased region" description="Acidic residues" evidence="3">
    <location>
        <begin position="309"/>
        <end position="343"/>
    </location>
</feature>
<feature type="compositionally biased region" description="Basic residues" evidence="3">
    <location>
        <begin position="347"/>
        <end position="356"/>
    </location>
</feature>
<gene>
    <name type="primary">NAP1;4</name>
    <name type="synonym">NAP1_L4</name>
</gene>
<name>NAP1D_TOBAC</name>
<sequence length="356" mass="40727">MSNSNKDHFDMSDLGASLPAAAAALSAEDRAGLVNALKNKLQNLAGQHSDILETLTPQVRKRVDVLRELQSQHDELESHFFEERAALEAKYQKLYEPLYTKRYEIVNGVVEVEGVNEAPMNQEEDKEAGNEKGVPNFWLTAMKTNEILAEEISERDEEALKYLKDIKWCKIDDRKGFKLEFFFDTNPFFTNSVLTKTYHMIDDDDPILEKAIGTKIDWCPGKCLTQKILKKKPKKGSKNAKPIIKTETCESFFNFFKPPQVPEDDDDDDIDEDAAEELQNLMEQDYDIGSTIRDKIIPHAVSWFTGEAAEGDEFEDIEDDDDDDDDDDDEDDEDEEDEDDEEEEKSKKKSSALKVE</sequence>
<dbReference type="EMBL" id="AJ438616">
    <property type="protein sequence ID" value="CAD27463.1"/>
    <property type="molecule type" value="mRNA"/>
</dbReference>
<dbReference type="RefSeq" id="NP_001312718.1">
    <property type="nucleotide sequence ID" value="NM_001325789.1"/>
</dbReference>
<dbReference type="RefSeq" id="XP_016486317.1">
    <property type="nucleotide sequence ID" value="XM_016630831.1"/>
</dbReference>
<dbReference type="SMR" id="Q70Z16"/>
<dbReference type="STRING" id="4097.Q70Z16"/>
<dbReference type="PaxDb" id="4097-Q70Z16"/>
<dbReference type="GeneID" id="107806625"/>
<dbReference type="KEGG" id="nta:107806625"/>
<dbReference type="OMA" id="VSPITWK"/>
<dbReference type="OrthoDB" id="27325at2759"/>
<dbReference type="Proteomes" id="UP000084051">
    <property type="component" value="Unplaced"/>
</dbReference>
<dbReference type="GO" id="GO:0000785">
    <property type="term" value="C:chromatin"/>
    <property type="evidence" value="ECO:0000318"/>
    <property type="project" value="GO_Central"/>
</dbReference>
<dbReference type="GO" id="GO:0005737">
    <property type="term" value="C:cytoplasm"/>
    <property type="evidence" value="ECO:0007669"/>
    <property type="project" value="UniProtKB-SubCell"/>
</dbReference>
<dbReference type="GO" id="GO:0005634">
    <property type="term" value="C:nucleus"/>
    <property type="evidence" value="ECO:0000318"/>
    <property type="project" value="GO_Central"/>
</dbReference>
<dbReference type="GO" id="GO:0003682">
    <property type="term" value="F:chromatin binding"/>
    <property type="evidence" value="ECO:0000318"/>
    <property type="project" value="GO_Central"/>
</dbReference>
<dbReference type="GO" id="GO:0042393">
    <property type="term" value="F:histone binding"/>
    <property type="evidence" value="ECO:0000318"/>
    <property type="project" value="GO_Central"/>
</dbReference>
<dbReference type="GO" id="GO:0000724">
    <property type="term" value="P:double-strand break repair via homologous recombination"/>
    <property type="evidence" value="ECO:0007669"/>
    <property type="project" value="UniProtKB-ARBA"/>
</dbReference>
<dbReference type="GO" id="GO:0006334">
    <property type="term" value="P:nucleosome assembly"/>
    <property type="evidence" value="ECO:0000318"/>
    <property type="project" value="GO_Central"/>
</dbReference>
<dbReference type="FunFam" id="1.20.5.1500:FF:000001">
    <property type="entry name" value="Nucleosome assembly protein 1-like 1"/>
    <property type="match status" value="1"/>
</dbReference>
<dbReference type="FunFam" id="3.30.1120.90:FF:000005">
    <property type="entry name" value="Nucleosome assembly protein11"/>
    <property type="match status" value="1"/>
</dbReference>
<dbReference type="Gene3D" id="1.20.5.1500">
    <property type="match status" value="1"/>
</dbReference>
<dbReference type="Gene3D" id="3.30.1120.90">
    <property type="entry name" value="Nucleosome assembly protein"/>
    <property type="match status" value="1"/>
</dbReference>
<dbReference type="InterPro" id="IPR037231">
    <property type="entry name" value="NAP-like_sf"/>
</dbReference>
<dbReference type="InterPro" id="IPR002164">
    <property type="entry name" value="NAP_family"/>
</dbReference>
<dbReference type="PANTHER" id="PTHR11875">
    <property type="entry name" value="TESTIS-SPECIFIC Y-ENCODED PROTEIN"/>
    <property type="match status" value="1"/>
</dbReference>
<dbReference type="Pfam" id="PF00956">
    <property type="entry name" value="NAP"/>
    <property type="match status" value="1"/>
</dbReference>
<dbReference type="SUPFAM" id="SSF143113">
    <property type="entry name" value="NAP-like"/>
    <property type="match status" value="1"/>
</dbReference>
<reference key="1">
    <citation type="journal article" date="2003" name="Planta">
        <title>Regulation of biosynthesis and intracellular localization of rice and tobacco homologues of nucleosome assembly protein 1.</title>
        <authorList>
            <person name="Dong A."/>
            <person name="Zhu Y."/>
            <person name="Yu Y."/>
            <person name="Cao K."/>
            <person name="Sun C."/>
            <person name="Shen W.H."/>
        </authorList>
    </citation>
    <scope>NUCLEOTIDE SEQUENCE [MRNA]</scope>
    <scope>FUNCTION</scope>
    <scope>SUBCELLULAR LOCATION</scope>
    <scope>DEVELOPMENTAL STAGE</scope>
    <source>
        <strain>cv. Bright Yellow 2</strain>
    </source>
</reference>
<reference key="2">
    <citation type="journal article" date="2005" name="Plant Physiol.">
        <title>Interacting proteins and differences in nuclear transport reveal specific functions for the NAP1 family proteins in plants.</title>
        <authorList>
            <person name="Dong A."/>
            <person name="Liu Z."/>
            <person name="Zhu Y."/>
            <person name="Yu F."/>
            <person name="Li Z."/>
            <person name="Cao K."/>
            <person name="Shen W.H."/>
        </authorList>
    </citation>
    <scope>FUNCTION</scope>
    <scope>SUBUNIT</scope>
    <scope>INTERACTION WITH NAP1;3 AND CYCB1;1</scope>
    <scope>SUBCELLULAR LOCATION</scope>
</reference>
<keyword id="KW-0143">Chaperone</keyword>
<keyword id="KW-0175">Coiled coil</keyword>
<keyword id="KW-0963">Cytoplasm</keyword>
<keyword id="KW-0539">Nucleus</keyword>
<keyword id="KW-1185">Reference proteome</keyword>
<organism>
    <name type="scientific">Nicotiana tabacum</name>
    <name type="common">Common tobacco</name>
    <dbReference type="NCBI Taxonomy" id="4097"/>
    <lineage>
        <taxon>Eukaryota</taxon>
        <taxon>Viridiplantae</taxon>
        <taxon>Streptophyta</taxon>
        <taxon>Embryophyta</taxon>
        <taxon>Tracheophyta</taxon>
        <taxon>Spermatophyta</taxon>
        <taxon>Magnoliopsida</taxon>
        <taxon>eudicotyledons</taxon>
        <taxon>Gunneridae</taxon>
        <taxon>Pentapetalae</taxon>
        <taxon>asterids</taxon>
        <taxon>lamiids</taxon>
        <taxon>Solanales</taxon>
        <taxon>Solanaceae</taxon>
        <taxon>Nicotianoideae</taxon>
        <taxon>Nicotianeae</taxon>
        <taxon>Nicotiana</taxon>
    </lineage>
</organism>
<comment type="function">
    <text evidence="1 4 5">May modulate chromatin structure by regulation of nucleosome assembly/disassembly (By similarity). Could function together with B-type cyclins in the regulation of microtubule dynamics.</text>
</comment>
<comment type="subunit">
    <text evidence="5">Can form homomeric and heteromeric protein complexes with NAP1;3. Binds histones H2A and H2B in vivo. Also able to bind histones H1 and H4 in vitro. Interacts with CYCB1;1 and with alpha tubulin.</text>
</comment>
<comment type="subcellular location">
    <subcellularLocation>
        <location evidence="1">Nucleus</location>
    </subcellularLocation>
    <subcellularLocation>
        <location evidence="4 5">Cytoplasm</location>
    </subcellularLocation>
</comment>
<comment type="developmental stage">
    <text evidence="4">Highly expressed at the G1/S transition.</text>
</comment>
<comment type="domain">
    <text>The acidic domain is probably involved in the interaction with histones.</text>
</comment>
<comment type="similarity">
    <text evidence="6">Belongs to the nucleosome assembly protein (NAP) family.</text>
</comment>
<protein>
    <recommendedName>
        <fullName>Nucleosome assembly protein 1;4</fullName>
        <shortName>NtNAP1;4</shortName>
    </recommendedName>
    <alternativeName>
        <fullName>Nucleosome assembly protein 1-like 4</fullName>
        <shortName>NtNAP1_L4</shortName>
    </alternativeName>
</protein>
<evidence type="ECO:0000250" key="1"/>
<evidence type="ECO:0000255" key="2"/>
<evidence type="ECO:0000256" key="3">
    <source>
        <dbReference type="SAM" id="MobiDB-lite"/>
    </source>
</evidence>
<evidence type="ECO:0000269" key="4">
    <source>
    </source>
</evidence>
<evidence type="ECO:0000269" key="5">
    <source>
    </source>
</evidence>
<evidence type="ECO:0000305" key="6"/>
<accession>Q70Z16</accession>
<proteinExistence type="evidence at protein level"/>